<protein>
    <recommendedName>
        <fullName>Polyadenylation factor subunit 2</fullName>
    </recommendedName>
</protein>
<name>PFS2_SCHPO</name>
<reference key="1">
    <citation type="journal article" date="2002" name="Nature">
        <title>The genome sequence of Schizosaccharomyces pombe.</title>
        <authorList>
            <person name="Wood V."/>
            <person name="Gwilliam R."/>
            <person name="Rajandream M.A."/>
            <person name="Lyne M.H."/>
            <person name="Lyne R."/>
            <person name="Stewart A."/>
            <person name="Sgouros J.G."/>
            <person name="Peat N."/>
            <person name="Hayles J."/>
            <person name="Baker S.G."/>
            <person name="Basham D."/>
            <person name="Bowman S."/>
            <person name="Brooks K."/>
            <person name="Brown D."/>
            <person name="Brown S."/>
            <person name="Chillingworth T."/>
            <person name="Churcher C.M."/>
            <person name="Collins M."/>
            <person name="Connor R."/>
            <person name="Cronin A."/>
            <person name="Davis P."/>
            <person name="Feltwell T."/>
            <person name="Fraser A."/>
            <person name="Gentles S."/>
            <person name="Goble A."/>
            <person name="Hamlin N."/>
            <person name="Harris D.E."/>
            <person name="Hidalgo J."/>
            <person name="Hodgson G."/>
            <person name="Holroyd S."/>
            <person name="Hornsby T."/>
            <person name="Howarth S."/>
            <person name="Huckle E.J."/>
            <person name="Hunt S."/>
            <person name="Jagels K."/>
            <person name="James K.D."/>
            <person name="Jones L."/>
            <person name="Jones M."/>
            <person name="Leather S."/>
            <person name="McDonald S."/>
            <person name="McLean J."/>
            <person name="Mooney P."/>
            <person name="Moule S."/>
            <person name="Mungall K.L."/>
            <person name="Murphy L.D."/>
            <person name="Niblett D."/>
            <person name="Odell C."/>
            <person name="Oliver K."/>
            <person name="O'Neil S."/>
            <person name="Pearson D."/>
            <person name="Quail M.A."/>
            <person name="Rabbinowitsch E."/>
            <person name="Rutherford K.M."/>
            <person name="Rutter S."/>
            <person name="Saunders D."/>
            <person name="Seeger K."/>
            <person name="Sharp S."/>
            <person name="Skelton J."/>
            <person name="Simmonds M.N."/>
            <person name="Squares R."/>
            <person name="Squares S."/>
            <person name="Stevens K."/>
            <person name="Taylor K."/>
            <person name="Taylor R.G."/>
            <person name="Tivey A."/>
            <person name="Walsh S.V."/>
            <person name="Warren T."/>
            <person name="Whitehead S."/>
            <person name="Woodward J.R."/>
            <person name="Volckaert G."/>
            <person name="Aert R."/>
            <person name="Robben J."/>
            <person name="Grymonprez B."/>
            <person name="Weltjens I."/>
            <person name="Vanstreels E."/>
            <person name="Rieger M."/>
            <person name="Schaefer M."/>
            <person name="Mueller-Auer S."/>
            <person name="Gabel C."/>
            <person name="Fuchs M."/>
            <person name="Duesterhoeft A."/>
            <person name="Fritzc C."/>
            <person name="Holzer E."/>
            <person name="Moestl D."/>
            <person name="Hilbert H."/>
            <person name="Borzym K."/>
            <person name="Langer I."/>
            <person name="Beck A."/>
            <person name="Lehrach H."/>
            <person name="Reinhardt R."/>
            <person name="Pohl T.M."/>
            <person name="Eger P."/>
            <person name="Zimmermann W."/>
            <person name="Wedler H."/>
            <person name="Wambutt R."/>
            <person name="Purnelle B."/>
            <person name="Goffeau A."/>
            <person name="Cadieu E."/>
            <person name="Dreano S."/>
            <person name="Gloux S."/>
            <person name="Lelaure V."/>
            <person name="Mottier S."/>
            <person name="Galibert F."/>
            <person name="Aves S.J."/>
            <person name="Xiang Z."/>
            <person name="Hunt C."/>
            <person name="Moore K."/>
            <person name="Hurst S.M."/>
            <person name="Lucas M."/>
            <person name="Rochet M."/>
            <person name="Gaillardin C."/>
            <person name="Tallada V.A."/>
            <person name="Garzon A."/>
            <person name="Thode G."/>
            <person name="Daga R.R."/>
            <person name="Cruzado L."/>
            <person name="Jimenez J."/>
            <person name="Sanchez M."/>
            <person name="del Rey F."/>
            <person name="Benito J."/>
            <person name="Dominguez A."/>
            <person name="Revuelta J.L."/>
            <person name="Moreno S."/>
            <person name="Armstrong J."/>
            <person name="Forsburg S.L."/>
            <person name="Cerutti L."/>
            <person name="Lowe T."/>
            <person name="McCombie W.R."/>
            <person name="Paulsen I."/>
            <person name="Potashkin J."/>
            <person name="Shpakovski G.V."/>
            <person name="Ussery D."/>
            <person name="Barrell B.G."/>
            <person name="Nurse P."/>
        </authorList>
    </citation>
    <scope>NUCLEOTIDE SEQUENCE [LARGE SCALE GENOMIC DNA]</scope>
    <source>
        <strain>972 / ATCC 24843</strain>
    </source>
</reference>
<reference key="2">
    <citation type="journal article" date="2005" name="Mol. Cell. Biol.">
        <title>Inactivation of the pre-mRNA cleavage and polyadenylation factor Pfs2 in fission yeast causes lethal cell cycle defects.</title>
        <authorList>
            <person name="Wang S.-W."/>
            <person name="Asakawa K."/>
            <person name="Win T.Z."/>
            <person name="Toda T."/>
            <person name="Norbury C.J."/>
        </authorList>
    </citation>
    <scope>FUNCTION</scope>
    <scope>SUBCELLULAR LOCATION</scope>
</reference>
<evidence type="ECO:0000256" key="1">
    <source>
        <dbReference type="SAM" id="MobiDB-lite"/>
    </source>
</evidence>
<evidence type="ECO:0000269" key="2">
    <source>
    </source>
</evidence>
<proteinExistence type="predicted"/>
<dbReference type="EMBL" id="CU329670">
    <property type="protein sequence ID" value="CAB55873.1"/>
    <property type="molecule type" value="Genomic_DNA"/>
</dbReference>
<dbReference type="PIR" id="T37587">
    <property type="entry name" value="T37587"/>
</dbReference>
<dbReference type="RefSeq" id="NP_592884.1">
    <property type="nucleotide sequence ID" value="NM_001018284.2"/>
</dbReference>
<dbReference type="SMR" id="Q9UTN4"/>
<dbReference type="BioGRID" id="279522">
    <property type="interactions" value="11"/>
</dbReference>
<dbReference type="FunCoup" id="Q9UTN4">
    <property type="interactions" value="160"/>
</dbReference>
<dbReference type="STRING" id="284812.Q9UTN4"/>
<dbReference type="iPTMnet" id="Q9UTN4"/>
<dbReference type="SwissPalm" id="Q9UTN4"/>
<dbReference type="PaxDb" id="4896-SPAC12G12.14c.1"/>
<dbReference type="EnsemblFungi" id="SPAC12G12.14c.1">
    <property type="protein sequence ID" value="SPAC12G12.14c.1:pep"/>
    <property type="gene ID" value="SPAC12G12.14c"/>
</dbReference>
<dbReference type="GeneID" id="2543089"/>
<dbReference type="KEGG" id="spo:2543089"/>
<dbReference type="PomBase" id="SPAC12G12.14c">
    <property type="gene designation" value="pfs2"/>
</dbReference>
<dbReference type="VEuPathDB" id="FungiDB:SPAC12G12.14c"/>
<dbReference type="eggNOG" id="KOG0284">
    <property type="taxonomic scope" value="Eukaryota"/>
</dbReference>
<dbReference type="HOGENOM" id="CLU_000288_77_1_1"/>
<dbReference type="InParanoid" id="Q9UTN4"/>
<dbReference type="OMA" id="RTMKFTH"/>
<dbReference type="PhylomeDB" id="Q9UTN4"/>
<dbReference type="Reactome" id="R-SPO-159231">
    <property type="pathway name" value="Transport of Mature mRNA Derived from an Intronless Transcript"/>
</dbReference>
<dbReference type="Reactome" id="R-SPO-77595">
    <property type="pathway name" value="Processing of Intronless Pre-mRNAs"/>
</dbReference>
<dbReference type="PRO" id="PR:Q9UTN4"/>
<dbReference type="Proteomes" id="UP000002485">
    <property type="component" value="Chromosome I"/>
</dbReference>
<dbReference type="GO" id="GO:0000785">
    <property type="term" value="C:chromatin"/>
    <property type="evidence" value="ECO:0000314"/>
    <property type="project" value="PomBase"/>
</dbReference>
<dbReference type="GO" id="GO:0005829">
    <property type="term" value="C:cytosol"/>
    <property type="evidence" value="ECO:0007005"/>
    <property type="project" value="PomBase"/>
</dbReference>
<dbReference type="GO" id="GO:0005847">
    <property type="term" value="C:mRNA cleavage and polyadenylation specificity factor complex"/>
    <property type="evidence" value="ECO:0000314"/>
    <property type="project" value="PomBase"/>
</dbReference>
<dbReference type="GO" id="GO:0005634">
    <property type="term" value="C:nucleus"/>
    <property type="evidence" value="ECO:0000314"/>
    <property type="project" value="PomBase"/>
</dbReference>
<dbReference type="GO" id="GO:0007059">
    <property type="term" value="P:chromosome segregation"/>
    <property type="evidence" value="ECO:0007669"/>
    <property type="project" value="UniProtKB-KW"/>
</dbReference>
<dbReference type="GO" id="GO:0180010">
    <property type="term" value="P:co-transcriptional mRNA 3'-end processing, cleavage and polyadenylation pathway"/>
    <property type="evidence" value="ECO:0000315"/>
    <property type="project" value="PomBase"/>
</dbReference>
<dbReference type="CDD" id="cd00200">
    <property type="entry name" value="WD40"/>
    <property type="match status" value="1"/>
</dbReference>
<dbReference type="FunFam" id="2.130.10.10:FF:001039">
    <property type="entry name" value="Polyadenylation factor subunit 2"/>
    <property type="match status" value="1"/>
</dbReference>
<dbReference type="FunFam" id="2.130.10.10:FF:002008">
    <property type="entry name" value="Polyadenylation factor subunit 2"/>
    <property type="match status" value="1"/>
</dbReference>
<dbReference type="Gene3D" id="2.130.10.10">
    <property type="entry name" value="YVTN repeat-like/Quinoprotein amine dehydrogenase"/>
    <property type="match status" value="2"/>
</dbReference>
<dbReference type="InterPro" id="IPR020472">
    <property type="entry name" value="G-protein_beta_WD-40_rep"/>
</dbReference>
<dbReference type="InterPro" id="IPR045245">
    <property type="entry name" value="Pfs2-like"/>
</dbReference>
<dbReference type="InterPro" id="IPR015943">
    <property type="entry name" value="WD40/YVTN_repeat-like_dom_sf"/>
</dbReference>
<dbReference type="InterPro" id="IPR036322">
    <property type="entry name" value="WD40_repeat_dom_sf"/>
</dbReference>
<dbReference type="InterPro" id="IPR001680">
    <property type="entry name" value="WD40_rpt"/>
</dbReference>
<dbReference type="PANTHER" id="PTHR22836:SF0">
    <property type="entry name" value="PRE-MRNA 3' END PROCESSING PROTEIN WDR33"/>
    <property type="match status" value="1"/>
</dbReference>
<dbReference type="PANTHER" id="PTHR22836">
    <property type="entry name" value="WD40 REPEAT PROTEIN"/>
    <property type="match status" value="1"/>
</dbReference>
<dbReference type="Pfam" id="PF00400">
    <property type="entry name" value="WD40"/>
    <property type="match status" value="7"/>
</dbReference>
<dbReference type="PRINTS" id="PR00320">
    <property type="entry name" value="GPROTEINBRPT"/>
</dbReference>
<dbReference type="SMART" id="SM00320">
    <property type="entry name" value="WD40"/>
    <property type="match status" value="7"/>
</dbReference>
<dbReference type="SUPFAM" id="SSF50978">
    <property type="entry name" value="WD40 repeat-like"/>
    <property type="match status" value="1"/>
</dbReference>
<dbReference type="PROSITE" id="PS50082">
    <property type="entry name" value="WD_REPEATS_2"/>
    <property type="match status" value="6"/>
</dbReference>
<dbReference type="PROSITE" id="PS50294">
    <property type="entry name" value="WD_REPEATS_REGION"/>
    <property type="match status" value="1"/>
</dbReference>
<keyword id="KW-0159">Chromosome partition</keyword>
<keyword id="KW-0507">mRNA processing</keyword>
<keyword id="KW-0539">Nucleus</keyword>
<keyword id="KW-1185">Reference proteome</keyword>
<keyword id="KW-0677">Repeat</keyword>
<keyword id="KW-0853">WD repeat</keyword>
<feature type="chain" id="PRO_0000051491" description="Polyadenylation factor subunit 2">
    <location>
        <begin position="1"/>
        <end position="509"/>
    </location>
</feature>
<feature type="repeat" description="WD 1">
    <location>
        <begin position="72"/>
        <end position="109"/>
    </location>
</feature>
<feature type="repeat" description="WD 2">
    <location>
        <begin position="113"/>
        <end position="151"/>
    </location>
</feature>
<feature type="repeat" description="WD 3">
    <location>
        <begin position="156"/>
        <end position="192"/>
    </location>
</feature>
<feature type="repeat" description="WD 4">
    <location>
        <begin position="196"/>
        <end position="234"/>
    </location>
</feature>
<feature type="repeat" description="WD 5">
    <location>
        <begin position="238"/>
        <end position="278"/>
    </location>
</feature>
<feature type="repeat" description="WD 6">
    <location>
        <begin position="282"/>
        <end position="321"/>
    </location>
</feature>
<feature type="repeat" description="WD 7">
    <location>
        <begin position="350"/>
        <end position="388"/>
    </location>
</feature>
<feature type="region of interest" description="Disordered" evidence="1">
    <location>
        <begin position="385"/>
        <end position="409"/>
    </location>
</feature>
<feature type="region of interest" description="Disordered" evidence="1">
    <location>
        <begin position="480"/>
        <end position="509"/>
    </location>
</feature>
<feature type="compositionally biased region" description="Basic and acidic residues" evidence="1">
    <location>
        <begin position="390"/>
        <end position="406"/>
    </location>
</feature>
<organism>
    <name type="scientific">Schizosaccharomyces pombe (strain 972 / ATCC 24843)</name>
    <name type="common">Fission yeast</name>
    <dbReference type="NCBI Taxonomy" id="284812"/>
    <lineage>
        <taxon>Eukaryota</taxon>
        <taxon>Fungi</taxon>
        <taxon>Dikarya</taxon>
        <taxon>Ascomycota</taxon>
        <taxon>Taphrinomycotina</taxon>
        <taxon>Schizosaccharomycetes</taxon>
        <taxon>Schizosaccharomycetales</taxon>
        <taxon>Schizosaccharomycetaceae</taxon>
        <taxon>Schizosaccharomyces</taxon>
    </lineage>
</organism>
<comment type="function">
    <text evidence="2">Required for 3'-end cleavage and polyadenylation of pre-mRNAs. Also involved in chromosome segregation where it has a role in chromosome attachment to the mitotic spindle.</text>
</comment>
<comment type="subcellular location">
    <subcellularLocation>
        <location evidence="2">Nucleus</location>
    </subcellularLocation>
</comment>
<sequence length="509" mass="57654">MERAENARIIQKPMTRRTVDYGSGLSKYIVNRHLRSNRYHIHVPRPNPNQIINLYPPYEYKYNNTSSLCTKYIHTSANKARHVINVVRWTPDGRRLLTGSSTGEFTLWNGLTFNFELINQSHDYAVRCAEWSTDGRWLISGDGGGMVKYFEPNLNNVKIVQAHEMEVRDVAFSPNDSKFVTASDDGSLKVWNFHMSTEELKLTGHGWDVKTVDWHPSKGLLASGSKDNLVKFWDPRTGTCIATLHGHKNTIMQASFQKNFGSNYLATVSRDSTCRVFDLRAMKDVRVLRGHEKDVNCVTWHPLYPNLLTTGGSDGSVNHYSLDEPPLLSQQKYHEKHPNVTLSASSYLLYPTAEIPFAHDLGIWSMQYHPLGHLLCTGSNDKTTRFWSRSRPDDKESTMDRHHLGEEQSEAMLSQRKAAIEEDDNYEPDENPLTETLANAHNPQFSGVLNLPGLGTMPSFPSPYQHGQPQIPGMLHASLSNSYAEPSTQNSFIPGLTSKSQDGYPQNYR</sequence>
<gene>
    <name type="primary">pfs2</name>
    <name type="ORF">SPAC12G12.14c</name>
</gene>
<accession>Q9UTN4</accession>
<accession>Q09876</accession>